<proteinExistence type="inferred from homology"/>
<keyword id="KW-0378">Hydrolase</keyword>
<keyword id="KW-0408">Iron</keyword>
<keyword id="KW-0479">Metal-binding</keyword>
<keyword id="KW-0648">Protein biosynthesis</keyword>
<keyword id="KW-1185">Reference proteome</keyword>
<gene>
    <name evidence="1" type="primary">def</name>
    <name type="ordered locus">Cj0191c</name>
</gene>
<reference key="1">
    <citation type="journal article" date="2000" name="Nature">
        <title>The genome sequence of the food-borne pathogen Campylobacter jejuni reveals hypervariable sequences.</title>
        <authorList>
            <person name="Parkhill J."/>
            <person name="Wren B.W."/>
            <person name="Mungall K.L."/>
            <person name="Ketley J.M."/>
            <person name="Churcher C.M."/>
            <person name="Basham D."/>
            <person name="Chillingworth T."/>
            <person name="Davies R.M."/>
            <person name="Feltwell T."/>
            <person name="Holroyd S."/>
            <person name="Jagels K."/>
            <person name="Karlyshev A.V."/>
            <person name="Moule S."/>
            <person name="Pallen M.J."/>
            <person name="Penn C.W."/>
            <person name="Quail M.A."/>
            <person name="Rajandream M.A."/>
            <person name="Rutherford K.M."/>
            <person name="van Vliet A.H.M."/>
            <person name="Whitehead S."/>
            <person name="Barrell B.G."/>
        </authorList>
    </citation>
    <scope>NUCLEOTIDE SEQUENCE [LARGE SCALE GENOMIC DNA]</scope>
    <source>
        <strain>ATCC 700819 / NCTC 11168</strain>
    </source>
</reference>
<feature type="chain" id="PRO_0000082757" description="Peptide deformylase">
    <location>
        <begin position="1"/>
        <end position="175"/>
    </location>
</feature>
<feature type="active site" evidence="1">
    <location>
        <position position="139"/>
    </location>
</feature>
<feature type="binding site" evidence="1">
    <location>
        <position position="96"/>
    </location>
    <ligand>
        <name>Fe cation</name>
        <dbReference type="ChEBI" id="CHEBI:24875"/>
    </ligand>
</feature>
<feature type="binding site" evidence="1">
    <location>
        <position position="138"/>
    </location>
    <ligand>
        <name>Fe cation</name>
        <dbReference type="ChEBI" id="CHEBI:24875"/>
    </ligand>
</feature>
<feature type="binding site" evidence="1">
    <location>
        <position position="142"/>
    </location>
    <ligand>
        <name>Fe cation</name>
        <dbReference type="ChEBI" id="CHEBI:24875"/>
    </ligand>
</feature>
<protein>
    <recommendedName>
        <fullName evidence="1">Peptide deformylase</fullName>
        <shortName evidence="1">PDF</shortName>
        <ecNumber evidence="1">3.5.1.88</ecNumber>
    </recommendedName>
    <alternativeName>
        <fullName evidence="1">Polypeptide deformylase</fullName>
    </alternativeName>
</protein>
<sequence length="175" mass="20581">MVRKIITYPNPRLFLNSEIVNKFDTELHTLLDDMYETMIASNGVGLAAIQVDIPLRVLLVNIFDENDEQKKEDLLEIINPEIIPLDEEMITCTEGCLSVPDFFEEVKRYNHILLKYQDRFGEFKELEAKGFLAVAIQHENDHLNGHLFIEKISFAKRQKFDKEFKKKKKNHKKEK</sequence>
<accession>Q9PIT8</accession>
<accession>Q0PBU8</accession>
<organism>
    <name type="scientific">Campylobacter jejuni subsp. jejuni serotype O:2 (strain ATCC 700819 / NCTC 11168)</name>
    <dbReference type="NCBI Taxonomy" id="192222"/>
    <lineage>
        <taxon>Bacteria</taxon>
        <taxon>Pseudomonadati</taxon>
        <taxon>Campylobacterota</taxon>
        <taxon>Epsilonproteobacteria</taxon>
        <taxon>Campylobacterales</taxon>
        <taxon>Campylobacteraceae</taxon>
        <taxon>Campylobacter</taxon>
    </lineage>
</organism>
<name>DEF_CAMJE</name>
<evidence type="ECO:0000255" key="1">
    <source>
        <dbReference type="HAMAP-Rule" id="MF_00163"/>
    </source>
</evidence>
<dbReference type="EC" id="3.5.1.88" evidence="1"/>
<dbReference type="EMBL" id="AL111168">
    <property type="protein sequence ID" value="CAL34360.1"/>
    <property type="molecule type" value="Genomic_DNA"/>
</dbReference>
<dbReference type="PIR" id="F81437">
    <property type="entry name" value="F81437"/>
</dbReference>
<dbReference type="RefSeq" id="WP_002851936.1">
    <property type="nucleotide sequence ID" value="NZ_SZUC01000006.1"/>
</dbReference>
<dbReference type="RefSeq" id="YP_002343649.1">
    <property type="nucleotide sequence ID" value="NC_002163.1"/>
</dbReference>
<dbReference type="SMR" id="Q9PIT8"/>
<dbReference type="IntAct" id="Q9PIT8">
    <property type="interactions" value="2"/>
</dbReference>
<dbReference type="STRING" id="192222.Cj0191c"/>
<dbReference type="PaxDb" id="192222-Cj0191c"/>
<dbReference type="EnsemblBacteria" id="CAL34360">
    <property type="protein sequence ID" value="CAL34360"/>
    <property type="gene ID" value="Cj0191c"/>
</dbReference>
<dbReference type="GeneID" id="904534"/>
<dbReference type="KEGG" id="cje:Cj0191c"/>
<dbReference type="PATRIC" id="fig|192222.6.peg.188"/>
<dbReference type="eggNOG" id="COG0242">
    <property type="taxonomic scope" value="Bacteria"/>
</dbReference>
<dbReference type="HOGENOM" id="CLU_061901_2_0_7"/>
<dbReference type="OrthoDB" id="9804313at2"/>
<dbReference type="Proteomes" id="UP000000799">
    <property type="component" value="Chromosome"/>
</dbReference>
<dbReference type="GO" id="GO:0046872">
    <property type="term" value="F:metal ion binding"/>
    <property type="evidence" value="ECO:0007669"/>
    <property type="project" value="UniProtKB-KW"/>
</dbReference>
<dbReference type="GO" id="GO:0042586">
    <property type="term" value="F:peptide deformylase activity"/>
    <property type="evidence" value="ECO:0007669"/>
    <property type="project" value="UniProtKB-UniRule"/>
</dbReference>
<dbReference type="GO" id="GO:0043686">
    <property type="term" value="P:co-translational protein modification"/>
    <property type="evidence" value="ECO:0007669"/>
    <property type="project" value="TreeGrafter"/>
</dbReference>
<dbReference type="GO" id="GO:0006412">
    <property type="term" value="P:translation"/>
    <property type="evidence" value="ECO:0007669"/>
    <property type="project" value="UniProtKB-UniRule"/>
</dbReference>
<dbReference type="CDD" id="cd00487">
    <property type="entry name" value="Pep_deformylase"/>
    <property type="match status" value="1"/>
</dbReference>
<dbReference type="Gene3D" id="3.90.45.10">
    <property type="entry name" value="Peptide deformylase"/>
    <property type="match status" value="1"/>
</dbReference>
<dbReference type="HAMAP" id="MF_00163">
    <property type="entry name" value="Pep_deformylase"/>
    <property type="match status" value="1"/>
</dbReference>
<dbReference type="InterPro" id="IPR023635">
    <property type="entry name" value="Peptide_deformylase"/>
</dbReference>
<dbReference type="InterPro" id="IPR036821">
    <property type="entry name" value="Peptide_deformylase_sf"/>
</dbReference>
<dbReference type="NCBIfam" id="TIGR00079">
    <property type="entry name" value="pept_deformyl"/>
    <property type="match status" value="1"/>
</dbReference>
<dbReference type="NCBIfam" id="NF001159">
    <property type="entry name" value="PRK00150.1-3"/>
    <property type="match status" value="1"/>
</dbReference>
<dbReference type="PANTHER" id="PTHR10458">
    <property type="entry name" value="PEPTIDE DEFORMYLASE"/>
    <property type="match status" value="1"/>
</dbReference>
<dbReference type="PANTHER" id="PTHR10458:SF22">
    <property type="entry name" value="PEPTIDE DEFORMYLASE"/>
    <property type="match status" value="1"/>
</dbReference>
<dbReference type="Pfam" id="PF01327">
    <property type="entry name" value="Pep_deformylase"/>
    <property type="match status" value="1"/>
</dbReference>
<dbReference type="PIRSF" id="PIRSF004749">
    <property type="entry name" value="Pep_def"/>
    <property type="match status" value="1"/>
</dbReference>
<dbReference type="PRINTS" id="PR01576">
    <property type="entry name" value="PDEFORMYLASE"/>
</dbReference>
<dbReference type="SUPFAM" id="SSF56420">
    <property type="entry name" value="Peptide deformylase"/>
    <property type="match status" value="1"/>
</dbReference>
<comment type="function">
    <text evidence="1">Removes the formyl group from the N-terminal Met of newly synthesized proteins. Requires at least a dipeptide for an efficient rate of reaction. N-terminal L-methionine is a prerequisite for activity but the enzyme has broad specificity at other positions.</text>
</comment>
<comment type="catalytic activity">
    <reaction evidence="1">
        <text>N-terminal N-formyl-L-methionyl-[peptide] + H2O = N-terminal L-methionyl-[peptide] + formate</text>
        <dbReference type="Rhea" id="RHEA:24420"/>
        <dbReference type="Rhea" id="RHEA-COMP:10639"/>
        <dbReference type="Rhea" id="RHEA-COMP:10640"/>
        <dbReference type="ChEBI" id="CHEBI:15377"/>
        <dbReference type="ChEBI" id="CHEBI:15740"/>
        <dbReference type="ChEBI" id="CHEBI:49298"/>
        <dbReference type="ChEBI" id="CHEBI:64731"/>
        <dbReference type="EC" id="3.5.1.88"/>
    </reaction>
</comment>
<comment type="cofactor">
    <cofactor evidence="1">
        <name>Fe(2+)</name>
        <dbReference type="ChEBI" id="CHEBI:29033"/>
    </cofactor>
    <text evidence="1">Binds 1 Fe(2+) ion.</text>
</comment>
<comment type="similarity">
    <text evidence="1">Belongs to the polypeptide deformylase family.</text>
</comment>